<protein>
    <recommendedName>
        <fullName>Activator of apoptosis harakiri</fullName>
    </recommendedName>
    <alternativeName>
        <fullName>BH3-interacting domain-containing protein 3</fullName>
    </alternativeName>
    <alternativeName>
        <fullName>Neuronal death protein DP5</fullName>
    </alternativeName>
</protein>
<keyword id="KW-0053">Apoptosis</keyword>
<keyword id="KW-0472">Membrane</keyword>
<keyword id="KW-0496">Mitochondrion</keyword>
<keyword id="KW-1185">Reference proteome</keyword>
<keyword id="KW-0812">Transmembrane</keyword>
<keyword id="KW-1133">Transmembrane helix</keyword>
<accession>P62816</accession>
<accession>P70678</accession>
<comment type="function">
    <text evidence="1">Promotes apoptosis.</text>
</comment>
<comment type="subunit">
    <text evidence="1">Interacts with BCL2 and BCL2L1. Interacts with C1QBP (By similarity).</text>
</comment>
<comment type="subcellular location">
    <subcellularLocation>
        <location evidence="1">Membrane</location>
        <topology evidence="1">Single-pass membrane protein</topology>
    </subcellularLocation>
    <subcellularLocation>
        <location evidence="1">Mitochondrion</location>
    </subcellularLocation>
</comment>
<comment type="domain">
    <text evidence="1">The BH3 motif is required for the induction of cell death.</text>
</comment>
<sequence>MCPCPRHRGRGPPAVCGCGDARPGLRWAAAQVTALRLQALGDELHRRAMRRRARPRDPLPALLPALRARWPWLCAAAQVAALAAWLLGRRSA</sequence>
<proteinExistence type="inferred from homology"/>
<organism>
    <name type="scientific">Mus musculus</name>
    <name type="common">Mouse</name>
    <dbReference type="NCBI Taxonomy" id="10090"/>
    <lineage>
        <taxon>Eukaryota</taxon>
        <taxon>Metazoa</taxon>
        <taxon>Chordata</taxon>
        <taxon>Craniata</taxon>
        <taxon>Vertebrata</taxon>
        <taxon>Euteleostomi</taxon>
        <taxon>Mammalia</taxon>
        <taxon>Eutheria</taxon>
        <taxon>Euarchontoglires</taxon>
        <taxon>Glires</taxon>
        <taxon>Rodentia</taxon>
        <taxon>Myomorpha</taxon>
        <taxon>Muroidea</taxon>
        <taxon>Muridae</taxon>
        <taxon>Murinae</taxon>
        <taxon>Mus</taxon>
        <taxon>Mus</taxon>
    </lineage>
</organism>
<dbReference type="EMBL" id="D83698">
    <property type="protein sequence ID" value="BAA12066.1"/>
    <property type="molecule type" value="mRNA"/>
</dbReference>
<dbReference type="CCDS" id="CCDS39236.1"/>
<dbReference type="RefSeq" id="NP_031571.1">
    <property type="nucleotide sequence ID" value="NM_007545.2"/>
</dbReference>
<dbReference type="SMR" id="P62816"/>
<dbReference type="FunCoup" id="P62816">
    <property type="interactions" value="64"/>
</dbReference>
<dbReference type="IntAct" id="P62816">
    <property type="interactions" value="1"/>
</dbReference>
<dbReference type="MINT" id="P62816"/>
<dbReference type="STRING" id="10090.ENSMUSP00000057532"/>
<dbReference type="PaxDb" id="10090-ENSMUSP00000057532"/>
<dbReference type="Antibodypedia" id="18831">
    <property type="antibodies" value="201 antibodies from 29 providers"/>
</dbReference>
<dbReference type="Ensembl" id="ENSMUST00000054836.7">
    <property type="protein sequence ID" value="ENSMUSP00000057532.5"/>
    <property type="gene ID" value="ENSMUSG00000046607.7"/>
</dbReference>
<dbReference type="GeneID" id="12123"/>
<dbReference type="KEGG" id="mmu:12123"/>
<dbReference type="UCSC" id="uc008zgg.1">
    <property type="organism name" value="mouse"/>
</dbReference>
<dbReference type="AGR" id="MGI:1201608"/>
<dbReference type="CTD" id="8739"/>
<dbReference type="MGI" id="MGI:1201608">
    <property type="gene designation" value="Hrk"/>
</dbReference>
<dbReference type="VEuPathDB" id="HostDB:ENSMUSG00000046607"/>
<dbReference type="eggNOG" id="ENOG502T2F4">
    <property type="taxonomic scope" value="Eukaryota"/>
</dbReference>
<dbReference type="GeneTree" id="ENSGT00390000007050"/>
<dbReference type="HOGENOM" id="CLU_2426351_0_0_1"/>
<dbReference type="InParanoid" id="P62816"/>
<dbReference type="OMA" id="QERTMWR"/>
<dbReference type="OrthoDB" id="9894001at2759"/>
<dbReference type="TreeFam" id="TF338168"/>
<dbReference type="BioGRID-ORCS" id="12123">
    <property type="hits" value="1 hit in 72 CRISPR screens"/>
</dbReference>
<dbReference type="ChiTaRS" id="Hrk">
    <property type="organism name" value="mouse"/>
</dbReference>
<dbReference type="PRO" id="PR:P62816"/>
<dbReference type="Proteomes" id="UP000000589">
    <property type="component" value="Chromosome 5"/>
</dbReference>
<dbReference type="RNAct" id="P62816">
    <property type="molecule type" value="protein"/>
</dbReference>
<dbReference type="Bgee" id="ENSMUSG00000046607">
    <property type="expression patterns" value="Expressed in dentate gyrus of hippocampal formation granule cell and 99 other cell types or tissues"/>
</dbReference>
<dbReference type="GO" id="GO:0016020">
    <property type="term" value="C:membrane"/>
    <property type="evidence" value="ECO:0007669"/>
    <property type="project" value="UniProtKB-SubCell"/>
</dbReference>
<dbReference type="GO" id="GO:0005739">
    <property type="term" value="C:mitochondrion"/>
    <property type="evidence" value="ECO:0000250"/>
    <property type="project" value="UniProtKB"/>
</dbReference>
<dbReference type="GO" id="GO:0006915">
    <property type="term" value="P:apoptotic process"/>
    <property type="evidence" value="ECO:0007669"/>
    <property type="project" value="UniProtKB-KW"/>
</dbReference>
<dbReference type="GO" id="GO:0051365">
    <property type="term" value="P:cellular response to potassium ion starvation"/>
    <property type="evidence" value="ECO:0007669"/>
    <property type="project" value="Ensembl"/>
</dbReference>
<dbReference type="GO" id="GO:0043065">
    <property type="term" value="P:positive regulation of apoptotic process"/>
    <property type="evidence" value="ECO:0000250"/>
    <property type="project" value="UniProtKB"/>
</dbReference>
<dbReference type="GO" id="GO:0043525">
    <property type="term" value="P:positive regulation of neuron apoptotic process"/>
    <property type="evidence" value="ECO:0007669"/>
    <property type="project" value="Ensembl"/>
</dbReference>
<dbReference type="GO" id="GO:0031334">
    <property type="term" value="P:positive regulation of protein-containing complex assembly"/>
    <property type="evidence" value="ECO:0007669"/>
    <property type="project" value="Ensembl"/>
</dbReference>
<dbReference type="GO" id="GO:0090200">
    <property type="term" value="P:positive regulation of release of cytochrome c from mitochondria"/>
    <property type="evidence" value="ECO:0007669"/>
    <property type="project" value="Ensembl"/>
</dbReference>
<dbReference type="InterPro" id="IPR017249">
    <property type="entry name" value="Apoptosis_activator_harakiri"/>
</dbReference>
<dbReference type="InterPro" id="IPR020728">
    <property type="entry name" value="Bcl2_BH3_motif_CS"/>
</dbReference>
<dbReference type="PANTHER" id="PTHR15056">
    <property type="entry name" value="ACTIVATOR OF APOPTOSIS HARAKIRI"/>
    <property type="match status" value="1"/>
</dbReference>
<dbReference type="PANTHER" id="PTHR15056:SF0">
    <property type="entry name" value="ACTIVATOR OF APOPTOSIS HARAKIRI"/>
    <property type="match status" value="1"/>
</dbReference>
<dbReference type="Pfam" id="PF15196">
    <property type="entry name" value="Harakiri"/>
    <property type="match status" value="1"/>
</dbReference>
<dbReference type="PIRSF" id="PIRSF037635">
    <property type="entry name" value="BID3"/>
    <property type="match status" value="1"/>
</dbReference>
<dbReference type="PROSITE" id="PS01259">
    <property type="entry name" value="BH3"/>
    <property type="match status" value="1"/>
</dbReference>
<gene>
    <name type="primary">Hrk</name>
    <name type="synonym">Bid3</name>
    <name type="synonym">Dp5</name>
</gene>
<feature type="chain" id="PRO_0000143107" description="Activator of apoptosis harakiri">
    <location>
        <begin position="1"/>
        <end position="92"/>
    </location>
</feature>
<feature type="transmembrane region" description="Helical" evidence="2">
    <location>
        <begin position="70"/>
        <end position="88"/>
    </location>
</feature>
<feature type="short sequence motif" description="BH3">
    <location>
        <begin position="33"/>
        <end position="47"/>
    </location>
</feature>
<evidence type="ECO:0000250" key="1"/>
<evidence type="ECO:0000255" key="2"/>
<reference key="1">
    <citation type="journal article" date="1997" name="J. Biol. Chem.">
        <title>Molecular cloning of a novel polypeptide, DP5, induced during programmed neuronal death.</title>
        <authorList>
            <person name="Imaizumi K."/>
            <person name="Tsuda M."/>
            <person name="Imai Y."/>
            <person name="Wanaka A."/>
            <person name="Takagi T."/>
            <person name="Tohyama M."/>
        </authorList>
    </citation>
    <scope>NUCLEOTIDE SEQUENCE [MRNA]</scope>
    <source>
        <tissue>Brain</tissue>
    </source>
</reference>
<name>HRK_MOUSE</name>